<feature type="chain" id="PRO_1000140064" description="Multifunctional CCA protein">
    <location>
        <begin position="1"/>
        <end position="412"/>
    </location>
</feature>
<feature type="domain" description="HD" evidence="1">
    <location>
        <begin position="228"/>
        <end position="329"/>
    </location>
</feature>
<feature type="binding site" evidence="1">
    <location>
        <position position="8"/>
    </location>
    <ligand>
        <name>ATP</name>
        <dbReference type="ChEBI" id="CHEBI:30616"/>
    </ligand>
</feature>
<feature type="binding site" evidence="1">
    <location>
        <position position="8"/>
    </location>
    <ligand>
        <name>CTP</name>
        <dbReference type="ChEBI" id="CHEBI:37563"/>
    </ligand>
</feature>
<feature type="binding site" evidence="1">
    <location>
        <position position="11"/>
    </location>
    <ligand>
        <name>ATP</name>
        <dbReference type="ChEBI" id="CHEBI:30616"/>
    </ligand>
</feature>
<feature type="binding site" evidence="1">
    <location>
        <position position="11"/>
    </location>
    <ligand>
        <name>CTP</name>
        <dbReference type="ChEBI" id="CHEBI:37563"/>
    </ligand>
</feature>
<feature type="binding site" evidence="1">
    <location>
        <position position="21"/>
    </location>
    <ligand>
        <name>Mg(2+)</name>
        <dbReference type="ChEBI" id="CHEBI:18420"/>
    </ligand>
</feature>
<feature type="binding site" evidence="1">
    <location>
        <position position="23"/>
    </location>
    <ligand>
        <name>Mg(2+)</name>
        <dbReference type="ChEBI" id="CHEBI:18420"/>
    </ligand>
</feature>
<feature type="binding site" evidence="1">
    <location>
        <position position="91"/>
    </location>
    <ligand>
        <name>ATP</name>
        <dbReference type="ChEBI" id="CHEBI:30616"/>
    </ligand>
</feature>
<feature type="binding site" evidence="1">
    <location>
        <position position="91"/>
    </location>
    <ligand>
        <name>CTP</name>
        <dbReference type="ChEBI" id="CHEBI:37563"/>
    </ligand>
</feature>
<feature type="binding site" evidence="1">
    <location>
        <position position="137"/>
    </location>
    <ligand>
        <name>ATP</name>
        <dbReference type="ChEBI" id="CHEBI:30616"/>
    </ligand>
</feature>
<feature type="binding site" evidence="1">
    <location>
        <position position="137"/>
    </location>
    <ligand>
        <name>CTP</name>
        <dbReference type="ChEBI" id="CHEBI:37563"/>
    </ligand>
</feature>
<feature type="binding site" evidence="1">
    <location>
        <position position="140"/>
    </location>
    <ligand>
        <name>ATP</name>
        <dbReference type="ChEBI" id="CHEBI:30616"/>
    </ligand>
</feature>
<feature type="binding site" evidence="1">
    <location>
        <position position="140"/>
    </location>
    <ligand>
        <name>CTP</name>
        <dbReference type="ChEBI" id="CHEBI:37563"/>
    </ligand>
</feature>
<sequence>MNIYLVGGAVRDSLLNLPVTEQDWVVVGATPEQLLKLGYQQVGKDFPVFLHPVSHEEYALARTERKSGQGYTGFTCYAAPDVTLEDDLLRRDLTVNAIARSADGEFIDPYHGKQDLENRVLRHVSDAFGEDPLRVLRVARFAARFAYLGFTIAPETMSLMSNMAQSGELSALTPERVWKETEKALKTQSPHVYFQVLRDCGALAVLFPEIERLFGVPAPEKWHPEIDTGIHTLMTLAIAAQLSPEVDIRFAALCHDLGKGLTPKEHWPHHHGHGPAGVKLVEQLCQRLRIPNPVRDLAKLVAEYHDLIHTVNKLRPETLLKLFNAIDVWRKPERLEQMIMTSEADARGRTGFENNPYPQGDYLRAAFQIANGVSIQEVVASGLQGLAIRDELQRRRQQALAEWKQTQETPLI</sequence>
<evidence type="ECO:0000255" key="1">
    <source>
        <dbReference type="HAMAP-Rule" id="MF_01261"/>
    </source>
</evidence>
<accession>B1JM22</accession>
<organism>
    <name type="scientific">Yersinia pseudotuberculosis serotype O:3 (strain YPIII)</name>
    <dbReference type="NCBI Taxonomy" id="502800"/>
    <lineage>
        <taxon>Bacteria</taxon>
        <taxon>Pseudomonadati</taxon>
        <taxon>Pseudomonadota</taxon>
        <taxon>Gammaproteobacteria</taxon>
        <taxon>Enterobacterales</taxon>
        <taxon>Yersiniaceae</taxon>
        <taxon>Yersinia</taxon>
    </lineage>
</organism>
<comment type="function">
    <text evidence="1">Catalyzes the addition and repair of the essential 3'-terminal CCA sequence in tRNAs without using a nucleic acid template. Adds these three nucleotides in the order of C, C, and A to the tRNA nucleotide-73, using CTP and ATP as substrates and producing inorganic pyrophosphate. tRNA 3'-terminal CCA addition is required both for tRNA processing and repair. Also involved in tRNA surveillance by mediating tandem CCA addition to generate a CCACCA at the 3' terminus of unstable tRNAs. While stable tRNAs receive only 3'-terminal CCA, unstable tRNAs are marked with CCACCA and rapidly degraded.</text>
</comment>
<comment type="catalytic activity">
    <reaction evidence="1">
        <text>a tRNA precursor + 2 CTP + ATP = a tRNA with a 3' CCA end + 3 diphosphate</text>
        <dbReference type="Rhea" id="RHEA:14433"/>
        <dbReference type="Rhea" id="RHEA-COMP:10465"/>
        <dbReference type="Rhea" id="RHEA-COMP:10468"/>
        <dbReference type="ChEBI" id="CHEBI:30616"/>
        <dbReference type="ChEBI" id="CHEBI:33019"/>
        <dbReference type="ChEBI" id="CHEBI:37563"/>
        <dbReference type="ChEBI" id="CHEBI:74896"/>
        <dbReference type="ChEBI" id="CHEBI:83071"/>
        <dbReference type="EC" id="2.7.7.72"/>
    </reaction>
</comment>
<comment type="catalytic activity">
    <reaction evidence="1">
        <text>a tRNA with a 3' CCA end + 2 CTP + ATP = a tRNA with a 3' CCACCA end + 3 diphosphate</text>
        <dbReference type="Rhea" id="RHEA:76235"/>
        <dbReference type="Rhea" id="RHEA-COMP:10468"/>
        <dbReference type="Rhea" id="RHEA-COMP:18655"/>
        <dbReference type="ChEBI" id="CHEBI:30616"/>
        <dbReference type="ChEBI" id="CHEBI:33019"/>
        <dbReference type="ChEBI" id="CHEBI:37563"/>
        <dbReference type="ChEBI" id="CHEBI:83071"/>
        <dbReference type="ChEBI" id="CHEBI:195187"/>
    </reaction>
    <physiologicalReaction direction="left-to-right" evidence="1">
        <dbReference type="Rhea" id="RHEA:76236"/>
    </physiologicalReaction>
</comment>
<comment type="cofactor">
    <cofactor evidence="1">
        <name>Mg(2+)</name>
        <dbReference type="ChEBI" id="CHEBI:18420"/>
    </cofactor>
    <text evidence="1">Magnesium is required for nucleotidyltransferase activity.</text>
</comment>
<comment type="cofactor">
    <cofactor evidence="1">
        <name>Ni(2+)</name>
        <dbReference type="ChEBI" id="CHEBI:49786"/>
    </cofactor>
    <text evidence="1">Nickel for phosphatase activity.</text>
</comment>
<comment type="subunit">
    <text evidence="1">Monomer. Can also form homodimers and oligomers.</text>
</comment>
<comment type="domain">
    <text evidence="1">Comprises two domains: an N-terminal domain containing the nucleotidyltransferase activity and a C-terminal HD domain associated with both phosphodiesterase and phosphatase activities.</text>
</comment>
<comment type="miscellaneous">
    <text evidence="1">A single active site specifically recognizes both ATP and CTP and is responsible for their addition.</text>
</comment>
<comment type="similarity">
    <text evidence="1">Belongs to the tRNA nucleotidyltransferase/poly(A) polymerase family. Bacterial CCA-adding enzyme type 1 subfamily.</text>
</comment>
<protein>
    <recommendedName>
        <fullName evidence="1">Multifunctional CCA protein</fullName>
    </recommendedName>
    <domain>
        <recommendedName>
            <fullName evidence="1">CCA-adding enzyme</fullName>
            <ecNumber evidence="1">2.7.7.72</ecNumber>
        </recommendedName>
        <alternativeName>
            <fullName evidence="1">CCA tRNA nucleotidyltransferase</fullName>
        </alternativeName>
        <alternativeName>
            <fullName evidence="1">tRNA CCA-pyrophosphorylase</fullName>
        </alternativeName>
        <alternativeName>
            <fullName evidence="1">tRNA adenylyl-/cytidylyl-transferase</fullName>
        </alternativeName>
        <alternativeName>
            <fullName evidence="1">tRNA nucleotidyltransferase</fullName>
        </alternativeName>
        <alternativeName>
            <fullName evidence="1">tRNA-NT</fullName>
        </alternativeName>
    </domain>
    <domain>
        <recommendedName>
            <fullName evidence="1">2'-nucleotidase</fullName>
            <ecNumber evidence="1">3.1.3.-</ecNumber>
        </recommendedName>
    </domain>
    <domain>
        <recommendedName>
            <fullName evidence="1">2',3'-cyclic phosphodiesterase</fullName>
            <ecNumber evidence="1">3.1.4.-</ecNumber>
        </recommendedName>
    </domain>
    <domain>
        <recommendedName>
            <fullName evidence="1">Phosphatase</fullName>
            <ecNumber evidence="1">3.1.3.-</ecNumber>
        </recommendedName>
    </domain>
</protein>
<reference key="1">
    <citation type="submission" date="2008-02" db="EMBL/GenBank/DDBJ databases">
        <title>Complete sequence of Yersinia pseudotuberculosis YPIII.</title>
        <authorList>
            <consortium name="US DOE Joint Genome Institute"/>
            <person name="Copeland A."/>
            <person name="Lucas S."/>
            <person name="Lapidus A."/>
            <person name="Glavina del Rio T."/>
            <person name="Dalin E."/>
            <person name="Tice H."/>
            <person name="Bruce D."/>
            <person name="Goodwin L."/>
            <person name="Pitluck S."/>
            <person name="Munk A.C."/>
            <person name="Brettin T."/>
            <person name="Detter J.C."/>
            <person name="Han C."/>
            <person name="Tapia R."/>
            <person name="Schmutz J."/>
            <person name="Larimer F."/>
            <person name="Land M."/>
            <person name="Hauser L."/>
            <person name="Challacombe J.F."/>
            <person name="Green L."/>
            <person name="Lindler L.E."/>
            <person name="Nikolich M.P."/>
            <person name="Richardson P."/>
        </authorList>
    </citation>
    <scope>NUCLEOTIDE SEQUENCE [LARGE SCALE GENOMIC DNA]</scope>
    <source>
        <strain>YPIII</strain>
    </source>
</reference>
<name>CCA_YERPY</name>
<gene>
    <name evidence="1" type="primary">cca</name>
    <name type="ordered locus">YPK_0641</name>
</gene>
<proteinExistence type="inferred from homology"/>
<dbReference type="EC" id="2.7.7.72" evidence="1"/>
<dbReference type="EC" id="3.1.3.-" evidence="1"/>
<dbReference type="EC" id="3.1.4.-" evidence="1"/>
<dbReference type="EMBL" id="CP000950">
    <property type="protein sequence ID" value="ACA66944.1"/>
    <property type="molecule type" value="Genomic_DNA"/>
</dbReference>
<dbReference type="RefSeq" id="WP_011193101.1">
    <property type="nucleotide sequence ID" value="NZ_CP009792.1"/>
</dbReference>
<dbReference type="SMR" id="B1JM22"/>
<dbReference type="KEGG" id="ypy:YPK_0641"/>
<dbReference type="PATRIC" id="fig|502800.11.peg.1258"/>
<dbReference type="GO" id="GO:0005524">
    <property type="term" value="F:ATP binding"/>
    <property type="evidence" value="ECO:0007669"/>
    <property type="project" value="UniProtKB-UniRule"/>
</dbReference>
<dbReference type="GO" id="GO:0004810">
    <property type="term" value="F:CCA tRNA nucleotidyltransferase activity"/>
    <property type="evidence" value="ECO:0007669"/>
    <property type="project" value="UniProtKB-UniRule"/>
</dbReference>
<dbReference type="GO" id="GO:0004112">
    <property type="term" value="F:cyclic-nucleotide phosphodiesterase activity"/>
    <property type="evidence" value="ECO:0007669"/>
    <property type="project" value="UniProtKB-UniRule"/>
</dbReference>
<dbReference type="GO" id="GO:0000287">
    <property type="term" value="F:magnesium ion binding"/>
    <property type="evidence" value="ECO:0007669"/>
    <property type="project" value="UniProtKB-UniRule"/>
</dbReference>
<dbReference type="GO" id="GO:0016791">
    <property type="term" value="F:phosphatase activity"/>
    <property type="evidence" value="ECO:0007669"/>
    <property type="project" value="UniProtKB-UniRule"/>
</dbReference>
<dbReference type="GO" id="GO:0000049">
    <property type="term" value="F:tRNA binding"/>
    <property type="evidence" value="ECO:0007669"/>
    <property type="project" value="UniProtKB-UniRule"/>
</dbReference>
<dbReference type="GO" id="GO:0042245">
    <property type="term" value="P:RNA repair"/>
    <property type="evidence" value="ECO:0007669"/>
    <property type="project" value="UniProtKB-KW"/>
</dbReference>
<dbReference type="GO" id="GO:0001680">
    <property type="term" value="P:tRNA 3'-terminal CCA addition"/>
    <property type="evidence" value="ECO:0007669"/>
    <property type="project" value="UniProtKB-UniRule"/>
</dbReference>
<dbReference type="CDD" id="cd00077">
    <property type="entry name" value="HDc"/>
    <property type="match status" value="1"/>
</dbReference>
<dbReference type="CDD" id="cd05398">
    <property type="entry name" value="NT_ClassII-CCAase"/>
    <property type="match status" value="1"/>
</dbReference>
<dbReference type="FunFam" id="1.10.3090.10:FF:000001">
    <property type="entry name" value="Multifunctional CCA protein"/>
    <property type="match status" value="1"/>
</dbReference>
<dbReference type="FunFam" id="3.30.460.10:FF:000016">
    <property type="entry name" value="Multifunctional CCA protein"/>
    <property type="match status" value="1"/>
</dbReference>
<dbReference type="Gene3D" id="3.30.460.10">
    <property type="entry name" value="Beta Polymerase, domain 2"/>
    <property type="match status" value="1"/>
</dbReference>
<dbReference type="Gene3D" id="1.10.3090.10">
    <property type="entry name" value="cca-adding enzyme, domain 2"/>
    <property type="match status" value="1"/>
</dbReference>
<dbReference type="HAMAP" id="MF_01261">
    <property type="entry name" value="CCA_bact_type1"/>
    <property type="match status" value="1"/>
</dbReference>
<dbReference type="HAMAP" id="MF_01262">
    <property type="entry name" value="CCA_bact_type2"/>
    <property type="match status" value="1"/>
</dbReference>
<dbReference type="InterPro" id="IPR012006">
    <property type="entry name" value="CCA_bact"/>
</dbReference>
<dbReference type="InterPro" id="IPR003607">
    <property type="entry name" value="HD/PDEase_dom"/>
</dbReference>
<dbReference type="InterPro" id="IPR006674">
    <property type="entry name" value="HD_domain"/>
</dbReference>
<dbReference type="InterPro" id="IPR043519">
    <property type="entry name" value="NT_sf"/>
</dbReference>
<dbReference type="InterPro" id="IPR002646">
    <property type="entry name" value="PolA_pol_head_dom"/>
</dbReference>
<dbReference type="InterPro" id="IPR032828">
    <property type="entry name" value="PolyA_RNA-bd"/>
</dbReference>
<dbReference type="InterPro" id="IPR050124">
    <property type="entry name" value="tRNA_CCA-adding_enzyme"/>
</dbReference>
<dbReference type="NCBIfam" id="NF008137">
    <property type="entry name" value="PRK10885.1"/>
    <property type="match status" value="1"/>
</dbReference>
<dbReference type="PANTHER" id="PTHR47545">
    <property type="entry name" value="MULTIFUNCTIONAL CCA PROTEIN"/>
    <property type="match status" value="1"/>
</dbReference>
<dbReference type="PANTHER" id="PTHR47545:SF1">
    <property type="entry name" value="MULTIFUNCTIONAL CCA PROTEIN"/>
    <property type="match status" value="1"/>
</dbReference>
<dbReference type="Pfam" id="PF01966">
    <property type="entry name" value="HD"/>
    <property type="match status" value="1"/>
</dbReference>
<dbReference type="Pfam" id="PF01743">
    <property type="entry name" value="PolyA_pol"/>
    <property type="match status" value="1"/>
</dbReference>
<dbReference type="Pfam" id="PF12627">
    <property type="entry name" value="PolyA_pol_RNAbd"/>
    <property type="match status" value="1"/>
</dbReference>
<dbReference type="PIRSF" id="PIRSF000813">
    <property type="entry name" value="CCA_bact"/>
    <property type="match status" value="1"/>
</dbReference>
<dbReference type="SMART" id="SM00471">
    <property type="entry name" value="HDc"/>
    <property type="match status" value="1"/>
</dbReference>
<dbReference type="SUPFAM" id="SSF81301">
    <property type="entry name" value="Nucleotidyltransferase"/>
    <property type="match status" value="1"/>
</dbReference>
<dbReference type="SUPFAM" id="SSF81891">
    <property type="entry name" value="Poly A polymerase C-terminal region-like"/>
    <property type="match status" value="1"/>
</dbReference>
<dbReference type="PROSITE" id="PS51831">
    <property type="entry name" value="HD"/>
    <property type="match status" value="1"/>
</dbReference>
<keyword id="KW-0067">ATP-binding</keyword>
<keyword id="KW-0378">Hydrolase</keyword>
<keyword id="KW-0460">Magnesium</keyword>
<keyword id="KW-0479">Metal-binding</keyword>
<keyword id="KW-0511">Multifunctional enzyme</keyword>
<keyword id="KW-0533">Nickel</keyword>
<keyword id="KW-0547">Nucleotide-binding</keyword>
<keyword id="KW-0548">Nucleotidyltransferase</keyword>
<keyword id="KW-0692">RNA repair</keyword>
<keyword id="KW-0694">RNA-binding</keyword>
<keyword id="KW-0808">Transferase</keyword>
<keyword id="KW-0819">tRNA processing</keyword>